<name>THOC2_ARATH</name>
<evidence type="ECO:0000250" key="1"/>
<evidence type="ECO:0000255" key="2"/>
<evidence type="ECO:0000256" key="3">
    <source>
        <dbReference type="SAM" id="MobiDB-lite"/>
    </source>
</evidence>
<evidence type="ECO:0000269" key="4">
    <source>
    </source>
</evidence>
<evidence type="ECO:0000269" key="5">
    <source>
    </source>
</evidence>
<evidence type="ECO:0000305" key="6"/>
<evidence type="ECO:0007744" key="7">
    <source>
    </source>
</evidence>
<feature type="chain" id="PRO_0000425583" description="THO complex subunit 2">
    <location>
        <begin position="1"/>
        <end position="1823"/>
    </location>
</feature>
<feature type="region of interest" description="Disordered" evidence="3">
    <location>
        <begin position="1244"/>
        <end position="1382"/>
    </location>
</feature>
<feature type="region of interest" description="Disordered" evidence="3">
    <location>
        <begin position="1394"/>
        <end position="1823"/>
    </location>
</feature>
<feature type="coiled-coil region" evidence="2">
    <location>
        <begin position="935"/>
        <end position="1003"/>
    </location>
</feature>
<feature type="short sequence motif" description="Nuclear localization signal" evidence="2">
    <location>
        <begin position="964"/>
        <end position="969"/>
    </location>
</feature>
<feature type="compositionally biased region" description="Basic and acidic residues" evidence="3">
    <location>
        <begin position="1272"/>
        <end position="1283"/>
    </location>
</feature>
<feature type="compositionally biased region" description="Basic and acidic residues" evidence="3">
    <location>
        <begin position="1312"/>
        <end position="1330"/>
    </location>
</feature>
<feature type="compositionally biased region" description="Basic and acidic residues" evidence="3">
    <location>
        <begin position="1356"/>
        <end position="1367"/>
    </location>
</feature>
<feature type="compositionally biased region" description="Polar residues" evidence="3">
    <location>
        <begin position="1394"/>
        <end position="1409"/>
    </location>
</feature>
<feature type="compositionally biased region" description="Basic and acidic residues" evidence="3">
    <location>
        <begin position="1432"/>
        <end position="1596"/>
    </location>
</feature>
<feature type="compositionally biased region" description="Pro residues" evidence="3">
    <location>
        <begin position="1600"/>
        <end position="1610"/>
    </location>
</feature>
<feature type="compositionally biased region" description="Basic and acidic residues" evidence="3">
    <location>
        <begin position="1616"/>
        <end position="1625"/>
    </location>
</feature>
<feature type="compositionally biased region" description="Basic and acidic residues" evidence="3">
    <location>
        <begin position="1636"/>
        <end position="1648"/>
    </location>
</feature>
<feature type="compositionally biased region" description="Basic and acidic residues" evidence="3">
    <location>
        <begin position="1655"/>
        <end position="1706"/>
    </location>
</feature>
<feature type="compositionally biased region" description="Basic and acidic residues" evidence="3">
    <location>
        <begin position="1768"/>
        <end position="1785"/>
    </location>
</feature>
<feature type="compositionally biased region" description="Polar residues" evidence="3">
    <location>
        <begin position="1802"/>
        <end position="1816"/>
    </location>
</feature>
<feature type="modified residue" description="Phosphoserine" evidence="7">
    <location>
        <position position="1646"/>
    </location>
</feature>
<feature type="modified residue" description="Phosphoserine" evidence="7">
    <location>
        <position position="1696"/>
    </location>
</feature>
<feature type="sequence conflict" description="In Ref. 4; AAO00879/BAE99240." evidence="6" ref="4">
    <original>P</original>
    <variation>S</variation>
    <location>
        <position position="615"/>
    </location>
</feature>
<gene>
    <name type="primary">THO2</name>
    <name type="synonym">EMB2793</name>
    <name type="ordered locus">At1g24706</name>
    <name type="ORF">F5A9.21/F5A9.22</name>
</gene>
<comment type="function">
    <text evidence="1">Acts as a component of the THO subcomplex of the TREX complex which is thought to couple mRNA transcription, processing and nuclear export.</text>
</comment>
<comment type="subunit">
    <text evidence="4">Component of the THO complex, which is composed of THO1, THO2, THO3, THO5, THO6 and THO7.</text>
</comment>
<comment type="subcellular location">
    <subcellularLocation>
        <location evidence="6">Nucleus</location>
    </subcellularLocation>
</comment>
<comment type="alternative products">
    <event type="alternative splicing"/>
    <isoform>
        <id>F4IAT2-1</id>
        <name>1</name>
        <sequence type="displayed"/>
    </isoform>
    <text>A number of isoforms are produced. According to EST sequences.</text>
</comment>
<comment type="disruption phenotype">
    <text evidence="5">Embryonic lethality when homozygous.</text>
</comment>
<comment type="similarity">
    <text evidence="6">Belongs to the THOC2 family.</text>
</comment>
<comment type="sequence caution" evidence="6">
    <conflict type="erroneous gene model prediction">
        <sequence resource="EMBL-CDS" id="AAG03121"/>
    </conflict>
    <text>Was originally thought to correspond to two different genes.</text>
</comment>
<comment type="sequence caution" evidence="6">
    <conflict type="erroneous gene model prediction">
        <sequence resource="EMBL-CDS" id="AAG03122"/>
    </conflict>
    <text>Was originally thought to correspond to two different genes.</text>
</comment>
<sequence length="1823" mass="207075">MSLPLLECKYVTEEFVREGKNGNYGTKLPSSVPMLRFLYELSWILVRGELPIQSCKAVLEGVEFLDKPSREELASCFADVVTQIAQDLTMSGDQRSRLIKLAKWLVESQTVPQRLFQERCEEEFLWEADMVKIKAQDLKGKEVRLNTRLLYQQTKFNLLREESEGYAKLATLLCRGSASSSHNASAATMGIIKSLIGHFDLDPNRVFDIVLDCFELEQDYDTFLNLIPIFPKSHASQILGFKFQYYQRLEVNSPVPVGLYKLTALLVKEEFINLESIYAHLLPKDEEVFEDYNVSSAKRFEEANKIGKINLAATGKDLMEDEKQGDVTVDLFAALDMESEAVTERLPELENNQTLGLLNGFLSVDDWYHANILFERLAPLNPVAHDQICSGLFRLIEKSITHSYRIARQTRFQSSSSASTVKLTPTANTTANRTYLDLPKEVFQMLVTVGPYLYRNTQLLQKICRVLRAYYLSALDLVRDGSNQEGSAYEVSRGHLKEVRLRVEEALGTCLLPSLQLVPANPAVGHEIWEVMSLLPYEARYRLYGEWEKDDEQNPLLLAARQVAKLDTRRILKRLAKENLKQLGRMVAKLAHANPMTVLRTIVNQIEAYRDMIAPVVDAFKYLTQLEYDILEYVVIERLAQSGRDKLKDDGINLSDWLQSLASFWGHLCKKYPSMELRGLFQYLVNQLKRGQGIELVLLQELVQQMANVQYTENLTEDQLDAMAGSETLRYHATSFGMMRNNKALIKSSNRLRDSLLPNDEPKLAIPLLLLIAQHRSLVVVNADAPYIKMVTEQFDRCHGILLQYVDFLSSAVSPTTAYARLVPSLDELVHTYHLEAEVAFLVFRPVMRLFKCRRNGDVSWPLDSGESMDADSEISESESSMILDVGTSEKAVTWSDVLDTVRTMLPSKAWNSLSPDLYATFWGLTLYDLHVPRNRYESEISKQHTALKTLEEVADNSSSAITKRKKEKERIQESLDRLTGELKKHEEHVASVRRRLSREKDTWLSSCPDTLKINMEFLQRCIFPRCTFSMADSVYCAMFVNMLHSLGTPFFNTVNHIDVLICKTLQPMICCCTEYEVGRLGRFLFETLKIAYHWKSKESVYEHECGNMPGFAVYYRYPNSQRVTFGQFVKVHWKWSGRITRLLIQCLESNEYMEIRNALIMLTKISGVFPVTRKTGINLEKRATKIKNDEREDLKVLATGVGAALSARKPHWVTDEEFSMGFLELKAPPVHTPKHASSQNGLLVGVSQGEPTGERATVNQQPESGGLGKDQMLKTKPLDGRTESIPSKSDQGHLKSKGGNPLDSQPSISKKSMEQKETDETPRISDENPVKPASKYSEAELKASSKRGASVNKSAKQDFGKDDGKSGKAIGRTSTADKDLNYLESRQSGLTKALSSTAANGSIATGSSKVKDDGAEALDAQKQSSRTVHSPRHEIVTSVRSSDRLQKRANAVEDSERISKRRKGDAEHKEHDSEPRSSDRDRSVEARLDLNKTVTDDQSTHRDQDRSKDKGYERQDRDHRERVDRSDKPRGDDVEKARDKSLERHGRERSVEKGLDKGTTRSYDRNKDERNKDDRSKLRHSEASLEKSHPDDHFHSQGLPPPPPLPPNIIPHSMAAKEDLERRAGGARHSQRLSPRHEEREKRRSEENLSVSVDDAKRRRDDDIRDRKRDDRETITVKGEEREREREREREREKSLPLKEDFEASKRRKLKREQQVPSAEPGEYSPMPHHSSLSTSMGPSSYEGRERKSSSMIQHGGYLEEPSIRLLGKEASSKMARRDPDPIAKSKSKNSNFLDIALESMTVNGKTTRGEQSGSGEIGSRE</sequence>
<organism>
    <name type="scientific">Arabidopsis thaliana</name>
    <name type="common">Mouse-ear cress</name>
    <dbReference type="NCBI Taxonomy" id="3702"/>
    <lineage>
        <taxon>Eukaryota</taxon>
        <taxon>Viridiplantae</taxon>
        <taxon>Streptophyta</taxon>
        <taxon>Embryophyta</taxon>
        <taxon>Tracheophyta</taxon>
        <taxon>Spermatophyta</taxon>
        <taxon>Magnoliopsida</taxon>
        <taxon>eudicotyledons</taxon>
        <taxon>Gunneridae</taxon>
        <taxon>Pentapetalae</taxon>
        <taxon>rosids</taxon>
        <taxon>malvids</taxon>
        <taxon>Brassicales</taxon>
        <taxon>Brassicaceae</taxon>
        <taxon>Camelineae</taxon>
        <taxon>Arabidopsis</taxon>
    </lineage>
</organism>
<keyword id="KW-0025">Alternative splicing</keyword>
<keyword id="KW-0175">Coiled coil</keyword>
<keyword id="KW-0507">mRNA processing</keyword>
<keyword id="KW-0508">mRNA splicing</keyword>
<keyword id="KW-0509">mRNA transport</keyword>
<keyword id="KW-0539">Nucleus</keyword>
<keyword id="KW-0597">Phosphoprotein</keyword>
<keyword id="KW-1185">Reference proteome</keyword>
<keyword id="KW-0694">RNA-binding</keyword>
<keyword id="KW-0813">Transport</keyword>
<accession>F4IAT2</accession>
<accession>Q8GUG8</accession>
<accession>Q9FXJ7</accession>
<accession>Q9FXJ8</accession>
<reference key="1">
    <citation type="journal article" date="2000" name="Nature">
        <title>Sequence and analysis of chromosome 1 of the plant Arabidopsis thaliana.</title>
        <authorList>
            <person name="Theologis A."/>
            <person name="Ecker J.R."/>
            <person name="Palm C.J."/>
            <person name="Federspiel N.A."/>
            <person name="Kaul S."/>
            <person name="White O."/>
            <person name="Alonso J."/>
            <person name="Altafi H."/>
            <person name="Araujo R."/>
            <person name="Bowman C.L."/>
            <person name="Brooks S.Y."/>
            <person name="Buehler E."/>
            <person name="Chan A."/>
            <person name="Chao Q."/>
            <person name="Chen H."/>
            <person name="Cheuk R.F."/>
            <person name="Chin C.W."/>
            <person name="Chung M.K."/>
            <person name="Conn L."/>
            <person name="Conway A.B."/>
            <person name="Conway A.R."/>
            <person name="Creasy T.H."/>
            <person name="Dewar K."/>
            <person name="Dunn P."/>
            <person name="Etgu P."/>
            <person name="Feldblyum T.V."/>
            <person name="Feng J.-D."/>
            <person name="Fong B."/>
            <person name="Fujii C.Y."/>
            <person name="Gill J.E."/>
            <person name="Goldsmith A.D."/>
            <person name="Haas B."/>
            <person name="Hansen N.F."/>
            <person name="Hughes B."/>
            <person name="Huizar L."/>
            <person name="Hunter J.L."/>
            <person name="Jenkins J."/>
            <person name="Johnson-Hopson C."/>
            <person name="Khan S."/>
            <person name="Khaykin E."/>
            <person name="Kim C.J."/>
            <person name="Koo H.L."/>
            <person name="Kremenetskaia I."/>
            <person name="Kurtz D.B."/>
            <person name="Kwan A."/>
            <person name="Lam B."/>
            <person name="Langin-Hooper S."/>
            <person name="Lee A."/>
            <person name="Lee J.M."/>
            <person name="Lenz C.A."/>
            <person name="Li J.H."/>
            <person name="Li Y.-P."/>
            <person name="Lin X."/>
            <person name="Liu S.X."/>
            <person name="Liu Z.A."/>
            <person name="Luros J.S."/>
            <person name="Maiti R."/>
            <person name="Marziali A."/>
            <person name="Militscher J."/>
            <person name="Miranda M."/>
            <person name="Nguyen M."/>
            <person name="Nierman W.C."/>
            <person name="Osborne B.I."/>
            <person name="Pai G."/>
            <person name="Peterson J."/>
            <person name="Pham P.K."/>
            <person name="Rizzo M."/>
            <person name="Rooney T."/>
            <person name="Rowley D."/>
            <person name="Sakano H."/>
            <person name="Salzberg S.L."/>
            <person name="Schwartz J.R."/>
            <person name="Shinn P."/>
            <person name="Southwick A.M."/>
            <person name="Sun H."/>
            <person name="Tallon L.J."/>
            <person name="Tambunga G."/>
            <person name="Toriumi M.J."/>
            <person name="Town C.D."/>
            <person name="Utterback T."/>
            <person name="Van Aken S."/>
            <person name="Vaysberg M."/>
            <person name="Vysotskaia V.S."/>
            <person name="Walker M."/>
            <person name="Wu D."/>
            <person name="Yu G."/>
            <person name="Fraser C.M."/>
            <person name="Venter J.C."/>
            <person name="Davis R.W."/>
        </authorList>
    </citation>
    <scope>NUCLEOTIDE SEQUENCE [LARGE SCALE GENOMIC DNA]</scope>
    <source>
        <strain>cv. Columbia</strain>
    </source>
</reference>
<reference key="2">
    <citation type="journal article" date="2017" name="Plant J.">
        <title>Araport11: a complete reannotation of the Arabidopsis thaliana reference genome.</title>
        <authorList>
            <person name="Cheng C.Y."/>
            <person name="Krishnakumar V."/>
            <person name="Chan A.P."/>
            <person name="Thibaud-Nissen F."/>
            <person name="Schobel S."/>
            <person name="Town C.D."/>
        </authorList>
    </citation>
    <scope>GENOME REANNOTATION</scope>
    <source>
        <strain>cv. Columbia</strain>
    </source>
</reference>
<reference key="3">
    <citation type="journal article" date="2003" name="Science">
        <title>Empirical analysis of transcriptional activity in the Arabidopsis genome.</title>
        <authorList>
            <person name="Yamada K."/>
            <person name="Lim J."/>
            <person name="Dale J.M."/>
            <person name="Chen H."/>
            <person name="Shinn P."/>
            <person name="Palm C.J."/>
            <person name="Southwick A.M."/>
            <person name="Wu H.C."/>
            <person name="Kim C.J."/>
            <person name="Nguyen M."/>
            <person name="Pham P.K."/>
            <person name="Cheuk R.F."/>
            <person name="Karlin-Newmann G."/>
            <person name="Liu S.X."/>
            <person name="Lam B."/>
            <person name="Sakano H."/>
            <person name="Wu T."/>
            <person name="Yu G."/>
            <person name="Miranda M."/>
            <person name="Quach H.L."/>
            <person name="Tripp M."/>
            <person name="Chang C.H."/>
            <person name="Lee J.M."/>
            <person name="Toriumi M.J."/>
            <person name="Chan M.M."/>
            <person name="Tang C.C."/>
            <person name="Onodera C.S."/>
            <person name="Deng J.M."/>
            <person name="Akiyama K."/>
            <person name="Ansari Y."/>
            <person name="Arakawa T."/>
            <person name="Banh J."/>
            <person name="Banno F."/>
            <person name="Bowser L."/>
            <person name="Brooks S.Y."/>
            <person name="Carninci P."/>
            <person name="Chao Q."/>
            <person name="Choy N."/>
            <person name="Enju A."/>
            <person name="Goldsmith A.D."/>
            <person name="Gurjal M."/>
            <person name="Hansen N.F."/>
            <person name="Hayashizaki Y."/>
            <person name="Johnson-Hopson C."/>
            <person name="Hsuan V.W."/>
            <person name="Iida K."/>
            <person name="Karnes M."/>
            <person name="Khan S."/>
            <person name="Koesema E."/>
            <person name="Ishida J."/>
            <person name="Jiang P.X."/>
            <person name="Jones T."/>
            <person name="Kawai J."/>
            <person name="Kamiya A."/>
            <person name="Meyers C."/>
            <person name="Nakajima M."/>
            <person name="Narusaka M."/>
            <person name="Seki M."/>
            <person name="Sakurai T."/>
            <person name="Satou M."/>
            <person name="Tamse R."/>
            <person name="Vaysberg M."/>
            <person name="Wallender E.K."/>
            <person name="Wong C."/>
            <person name="Yamamura Y."/>
            <person name="Yuan S."/>
            <person name="Shinozaki K."/>
            <person name="Davis R.W."/>
            <person name="Theologis A."/>
            <person name="Ecker J.R."/>
        </authorList>
    </citation>
    <scope>NUCLEOTIDE SEQUENCE [LARGE SCALE MRNA] OF 1-668</scope>
    <source>
        <strain>cv. Columbia</strain>
    </source>
</reference>
<reference key="4">
    <citation type="submission" date="2006-07" db="EMBL/GenBank/DDBJ databases">
        <title>Large-scale analysis of RIKEN Arabidopsis full-length (RAFL) cDNAs.</title>
        <authorList>
            <person name="Totoki Y."/>
            <person name="Seki M."/>
            <person name="Ishida J."/>
            <person name="Nakajima M."/>
            <person name="Enju A."/>
            <person name="Kamiya A."/>
            <person name="Narusaka M."/>
            <person name="Shin-i T."/>
            <person name="Nakagawa M."/>
            <person name="Sakamoto N."/>
            <person name="Oishi K."/>
            <person name="Kohara Y."/>
            <person name="Kobayashi M."/>
            <person name="Toyoda A."/>
            <person name="Sakaki Y."/>
            <person name="Sakurai T."/>
            <person name="Iida K."/>
            <person name="Akiyama K."/>
            <person name="Satou M."/>
            <person name="Toyoda T."/>
            <person name="Konagaya A."/>
            <person name="Carninci P."/>
            <person name="Kawai J."/>
            <person name="Hayashizaki Y."/>
            <person name="Shinozaki K."/>
        </authorList>
    </citation>
    <scope>NUCLEOTIDE SEQUENCE [LARGE SCALE MRNA] OF 1-668</scope>
    <source>
        <strain>cv. Columbia</strain>
    </source>
</reference>
<reference key="5">
    <citation type="journal article" date="2009" name="Plant Physiol.">
        <title>Large-scale Arabidopsis phosphoproteome profiling reveals novel chloroplast kinase substrates and phosphorylation networks.</title>
        <authorList>
            <person name="Reiland S."/>
            <person name="Messerli G."/>
            <person name="Baerenfaller K."/>
            <person name="Gerrits B."/>
            <person name="Endler A."/>
            <person name="Grossmann J."/>
            <person name="Gruissem W."/>
            <person name="Baginsky S."/>
        </authorList>
    </citation>
    <scope>PHOSPHORYLATION [LARGE SCALE ANALYSIS] AT SER-1646 AND SER-1696</scope>
    <scope>IDENTIFICATION BY MASS SPECTROMETRY [LARGE SCALE ANALYSIS]</scope>
</reference>
<reference key="6">
    <citation type="journal article" date="2010" name="Proc. Natl. Acad. Sci. U.S.A.">
        <title>Putative Arabidopsis THO/TREX mRNA export complex is involved in transgene and endogenous siRNA biosynthesis.</title>
        <authorList>
            <person name="Yelina N.E."/>
            <person name="Smith L.M."/>
            <person name="Jones A.M."/>
            <person name="Patel K."/>
            <person name="Kelly K.A."/>
            <person name="Baulcombe D.C."/>
        </authorList>
    </citation>
    <scope>IDENTIFICATION BY MASS SPECTROMETRY</scope>
    <scope>SUBUNIT</scope>
</reference>
<reference key="7">
    <citation type="journal article" date="2010" name="RNA">
        <title>Characterization of EMU, the Arabidopsis homolog of the yeast THO complex member HPR1.</title>
        <authorList>
            <person name="Furumizu C."/>
            <person name="Tsukaya H."/>
            <person name="Komeda Y."/>
        </authorList>
    </citation>
    <scope>DISRUPTION PHENOTYPE</scope>
</reference>
<dbReference type="EMBL" id="AC004133">
    <property type="protein sequence ID" value="AAG03121.1"/>
    <property type="status" value="ALT_SEQ"/>
    <property type="molecule type" value="Genomic_DNA"/>
</dbReference>
<dbReference type="EMBL" id="AC004133">
    <property type="protein sequence ID" value="AAG03122.1"/>
    <property type="status" value="ALT_SEQ"/>
    <property type="molecule type" value="Genomic_DNA"/>
</dbReference>
<dbReference type="EMBL" id="CP002684">
    <property type="protein sequence ID" value="AEE30558.1"/>
    <property type="molecule type" value="Genomic_DNA"/>
</dbReference>
<dbReference type="EMBL" id="BT002519">
    <property type="protein sequence ID" value="AAO00879.1"/>
    <property type="molecule type" value="mRNA"/>
</dbReference>
<dbReference type="EMBL" id="AK227201">
    <property type="protein sequence ID" value="BAE99240.1"/>
    <property type="molecule type" value="mRNA"/>
</dbReference>
<dbReference type="PIR" id="H86379">
    <property type="entry name" value="H86379"/>
</dbReference>
<dbReference type="RefSeq" id="NP_001185086.1">
    <molecule id="F4IAT2-1"/>
    <property type="nucleotide sequence ID" value="NM_001198157.1"/>
</dbReference>
<dbReference type="SMR" id="F4IAT2"/>
<dbReference type="BioGRID" id="24318">
    <property type="interactions" value="26"/>
</dbReference>
<dbReference type="FunCoup" id="F4IAT2">
    <property type="interactions" value="4055"/>
</dbReference>
<dbReference type="STRING" id="3702.F4IAT2"/>
<dbReference type="GlyGen" id="F4IAT2">
    <property type="glycosylation" value="1 site"/>
</dbReference>
<dbReference type="iPTMnet" id="F4IAT2"/>
<dbReference type="PaxDb" id="3702-AT1G24706.2"/>
<dbReference type="ProteomicsDB" id="246423">
    <molecule id="F4IAT2-1"/>
</dbReference>
<dbReference type="EnsemblPlants" id="AT1G24706.2">
    <molecule id="F4IAT2-1"/>
    <property type="protein sequence ID" value="AT1G24706.2"/>
    <property type="gene ID" value="AT1G24706"/>
</dbReference>
<dbReference type="GeneID" id="839081"/>
<dbReference type="Gramene" id="AT1G24706.2">
    <molecule id="F4IAT2-1"/>
    <property type="protein sequence ID" value="AT1G24706.2"/>
    <property type="gene ID" value="AT1G24706"/>
</dbReference>
<dbReference type="KEGG" id="ath:AT1G24706"/>
<dbReference type="Araport" id="AT1G24706"/>
<dbReference type="TAIR" id="AT1G24706">
    <property type="gene designation" value="THO2"/>
</dbReference>
<dbReference type="eggNOG" id="KOG1874">
    <property type="taxonomic scope" value="Eukaryota"/>
</dbReference>
<dbReference type="InParanoid" id="F4IAT2"/>
<dbReference type="PRO" id="PR:F4IAT2"/>
<dbReference type="Proteomes" id="UP000006548">
    <property type="component" value="Chromosome 1"/>
</dbReference>
<dbReference type="ExpressionAtlas" id="F4IAT2">
    <property type="expression patterns" value="baseline and differential"/>
</dbReference>
<dbReference type="GO" id="GO:0016607">
    <property type="term" value="C:nuclear speck"/>
    <property type="evidence" value="ECO:0000314"/>
    <property type="project" value="TAIR"/>
</dbReference>
<dbReference type="GO" id="GO:0005634">
    <property type="term" value="C:nucleus"/>
    <property type="evidence" value="ECO:0000314"/>
    <property type="project" value="TAIR"/>
</dbReference>
<dbReference type="GO" id="GO:0000347">
    <property type="term" value="C:THO complex"/>
    <property type="evidence" value="ECO:0000314"/>
    <property type="project" value="UniProtKB"/>
</dbReference>
<dbReference type="GO" id="GO:0003723">
    <property type="term" value="F:RNA binding"/>
    <property type="evidence" value="ECO:0000314"/>
    <property type="project" value="TAIR"/>
</dbReference>
<dbReference type="GO" id="GO:0035196">
    <property type="term" value="P:miRNA processing"/>
    <property type="evidence" value="ECO:0000315"/>
    <property type="project" value="TAIR"/>
</dbReference>
<dbReference type="GO" id="GO:1990428">
    <property type="term" value="P:miRNA transport"/>
    <property type="evidence" value="ECO:0000314"/>
    <property type="project" value="TAIR"/>
</dbReference>
<dbReference type="GO" id="GO:0006406">
    <property type="term" value="P:mRNA export from nucleus"/>
    <property type="evidence" value="ECO:0007669"/>
    <property type="project" value="InterPro"/>
</dbReference>
<dbReference type="GO" id="GO:0006397">
    <property type="term" value="P:mRNA processing"/>
    <property type="evidence" value="ECO:0007669"/>
    <property type="project" value="UniProtKB-KW"/>
</dbReference>
<dbReference type="GO" id="GO:0008380">
    <property type="term" value="P:RNA splicing"/>
    <property type="evidence" value="ECO:0007669"/>
    <property type="project" value="UniProtKB-KW"/>
</dbReference>
<dbReference type="InterPro" id="IPR040007">
    <property type="entry name" value="Tho2"/>
</dbReference>
<dbReference type="InterPro" id="IPR021418">
    <property type="entry name" value="THO_THOC2_C"/>
</dbReference>
<dbReference type="InterPro" id="IPR021726">
    <property type="entry name" value="THO_THOC2_N"/>
</dbReference>
<dbReference type="InterPro" id="IPR032302">
    <property type="entry name" value="THOC2_N"/>
</dbReference>
<dbReference type="PANTHER" id="PTHR21597:SF0">
    <property type="entry name" value="THO COMPLEX SUBUNIT 2"/>
    <property type="match status" value="1"/>
</dbReference>
<dbReference type="PANTHER" id="PTHR21597">
    <property type="entry name" value="THO2 PROTEIN"/>
    <property type="match status" value="1"/>
</dbReference>
<dbReference type="Pfam" id="PF11262">
    <property type="entry name" value="Tho2"/>
    <property type="match status" value="1"/>
</dbReference>
<dbReference type="Pfam" id="PF11732">
    <property type="entry name" value="Thoc2"/>
    <property type="match status" value="1"/>
</dbReference>
<dbReference type="Pfam" id="PF16134">
    <property type="entry name" value="THOC2_N"/>
    <property type="match status" value="2"/>
</dbReference>
<protein>
    <recommendedName>
        <fullName>THO complex subunit 2</fullName>
        <shortName>AtTHO2</shortName>
    </recommendedName>
    <alternativeName>
        <fullName>Protein EMBRYO DEFECTIVE 2793</fullName>
    </alternativeName>
</protein>
<proteinExistence type="evidence at protein level"/>